<sequence>MASASYHISNLLEKMTSSDKDFRFMATNDLMTELQKDSIKLDDDSERKVVKMILRLLEDKNGEVQNLAVKCLGPLVSKVKEYQVETIVDTLCTNMLSDKEQLRDISSIGLKTVIGELPPASSGSALAANVCKKITGRLTSAIAKQEDVSVQLEALDIMADMLSRQGGLLVNFHPSILTCLLPQLTSPRLAVRKRTIIALGHLVMSCGNIVFVDLIEHLLSELSKNDSMSTTRTYIQCIAAISRQAGHRIGEYLEKIIPLVVKFCNVDDDELREYCIQAFESFVRRCPKEVYPHVSTIINICLKYLTYDPNYNYDDEDEDENAMDADGGDDDDQGSDDEYSDDDDMSWKVRRAAAKCLDAVVSTRHEMLPEFYKTVSPALIARFKEREENVKADVFHAYLSLLKQTRPVQSWLCDPDAMEQGDTPLTMLQSQVPNIVKALHKQMKEKSVKTRQCCFNMLTELVNVLPGALTQHIPVLVPGIIFSLNDKSSSSNLKIDALSCLYVILCNHSPQVFHPHVQALVPPVVACVGDPFYKITSEALLVTQQLVKVIRPLDQPSSFDATPYIKDLFTCTIKRLKAADIDQEVKERAISCMGQIICNLGDNLGPDLSNTLQIFLERLKNEITRLTTVKALTLIAGSPLKIDLRPVLGEGVPILASFLRKNQRALKLGTLSALDILIKNYSDSLTAAMIDAVLDELPPLISESDMHVSQMAISFLTTLAKVYPSSLSKISGSILNELIGLVRSPLLQGGALSAMLDFFQALVVTGTNNLGYMDLLRMLTGPVYSQSTALTHKQSYYSIAKCVAALTRACPKEGPAVVGQFIQDVKNSRSTDSIRLLALLSLGEVGHHIDLSGQLELKSVILEAFSSPSEEVKSAASYALGSISVGNLPEYLPFVLQEITSQPKRQYLLLHSLKEIISSASVAGLKPYVENIWALLLKHCECAEEGTRNVVAECLGKLTLIDPETLLPRLKGYLISGSSYARSSVVTAVKFTISDHPQPIDPLLKNCIGDFLKTLEDPDLNVRRVALVTFNSAAHNKPSLIRDLLDSVLPHLYNETKVRKELIREVEMGPFKHTVDDGLDIRKAAFECMYTLLDSCLDRLDIFEFLNHVEDGLKDHYDIKMLTFLMLVRLSTLCPSAVLQRLDRLVEPLRATCTTKVKANSVKQEFEKQDELKRSAMRAVAALLTIPEAEKSPLMSEFQSQISSNPELAAIFESIQKDSSSTNLESMDTS</sequence>
<reference key="1">
    <citation type="journal article" date="2003" name="DNA Res.">
        <title>Prediction of the coding sequences of mouse homologues of KIAA gene: III. The complete nucleotide sequences of 500 mouse KIAA-homologous cDNAs identified by screening of terminal sequences of cDNA clones randomly sampled from size-fractionated libraries.</title>
        <authorList>
            <person name="Okazaki N."/>
            <person name="Kikuno R."/>
            <person name="Ohara R."/>
            <person name="Inamoto S."/>
            <person name="Koseki H."/>
            <person name="Hiraoka S."/>
            <person name="Saga Y."/>
            <person name="Nagase T."/>
            <person name="Ohara O."/>
            <person name="Koga H."/>
        </authorList>
    </citation>
    <scope>NUCLEOTIDE SEQUENCE [LARGE SCALE MRNA]</scope>
    <source>
        <tissue>Embryonic tail</tissue>
    </source>
</reference>
<reference key="2">
    <citation type="journal article" date="2004" name="Genome Res.">
        <title>The status, quality, and expansion of the NIH full-length cDNA project: the Mammalian Gene Collection (MGC).</title>
        <authorList>
            <consortium name="The MGC Project Team"/>
        </authorList>
    </citation>
    <scope>NUCLEOTIDE SEQUENCE [LARGE SCALE MRNA] OF 342-1230</scope>
    <source>
        <strain>FVB/N</strain>
        <tissue>Kidney</tissue>
    </source>
</reference>
<reference key="3">
    <citation type="journal article" date="2005" name="Science">
        <title>The transcriptional landscape of the mammalian genome.</title>
        <authorList>
            <person name="Carninci P."/>
            <person name="Kasukawa T."/>
            <person name="Katayama S."/>
            <person name="Gough J."/>
            <person name="Frith M.C."/>
            <person name="Maeda N."/>
            <person name="Oyama R."/>
            <person name="Ravasi T."/>
            <person name="Lenhard B."/>
            <person name="Wells C."/>
            <person name="Kodzius R."/>
            <person name="Shimokawa K."/>
            <person name="Bajic V.B."/>
            <person name="Brenner S.E."/>
            <person name="Batalov S."/>
            <person name="Forrest A.R."/>
            <person name="Zavolan M."/>
            <person name="Davis M.J."/>
            <person name="Wilming L.G."/>
            <person name="Aidinis V."/>
            <person name="Allen J.E."/>
            <person name="Ambesi-Impiombato A."/>
            <person name="Apweiler R."/>
            <person name="Aturaliya R.N."/>
            <person name="Bailey T.L."/>
            <person name="Bansal M."/>
            <person name="Baxter L."/>
            <person name="Beisel K.W."/>
            <person name="Bersano T."/>
            <person name="Bono H."/>
            <person name="Chalk A.M."/>
            <person name="Chiu K.P."/>
            <person name="Choudhary V."/>
            <person name="Christoffels A."/>
            <person name="Clutterbuck D.R."/>
            <person name="Crowe M.L."/>
            <person name="Dalla E."/>
            <person name="Dalrymple B.P."/>
            <person name="de Bono B."/>
            <person name="Della Gatta G."/>
            <person name="di Bernardo D."/>
            <person name="Down T."/>
            <person name="Engstrom P."/>
            <person name="Fagiolini M."/>
            <person name="Faulkner G."/>
            <person name="Fletcher C.F."/>
            <person name="Fukushima T."/>
            <person name="Furuno M."/>
            <person name="Futaki S."/>
            <person name="Gariboldi M."/>
            <person name="Georgii-Hemming P."/>
            <person name="Gingeras T.R."/>
            <person name="Gojobori T."/>
            <person name="Green R.E."/>
            <person name="Gustincich S."/>
            <person name="Harbers M."/>
            <person name="Hayashi Y."/>
            <person name="Hensch T.K."/>
            <person name="Hirokawa N."/>
            <person name="Hill D."/>
            <person name="Huminiecki L."/>
            <person name="Iacono M."/>
            <person name="Ikeo K."/>
            <person name="Iwama A."/>
            <person name="Ishikawa T."/>
            <person name="Jakt M."/>
            <person name="Kanapin A."/>
            <person name="Katoh M."/>
            <person name="Kawasawa Y."/>
            <person name="Kelso J."/>
            <person name="Kitamura H."/>
            <person name="Kitano H."/>
            <person name="Kollias G."/>
            <person name="Krishnan S.P."/>
            <person name="Kruger A."/>
            <person name="Kummerfeld S.K."/>
            <person name="Kurochkin I.V."/>
            <person name="Lareau L.F."/>
            <person name="Lazarevic D."/>
            <person name="Lipovich L."/>
            <person name="Liu J."/>
            <person name="Liuni S."/>
            <person name="McWilliam S."/>
            <person name="Madan Babu M."/>
            <person name="Madera M."/>
            <person name="Marchionni L."/>
            <person name="Matsuda H."/>
            <person name="Matsuzawa S."/>
            <person name="Miki H."/>
            <person name="Mignone F."/>
            <person name="Miyake S."/>
            <person name="Morris K."/>
            <person name="Mottagui-Tabar S."/>
            <person name="Mulder N."/>
            <person name="Nakano N."/>
            <person name="Nakauchi H."/>
            <person name="Ng P."/>
            <person name="Nilsson R."/>
            <person name="Nishiguchi S."/>
            <person name="Nishikawa S."/>
            <person name="Nori F."/>
            <person name="Ohara O."/>
            <person name="Okazaki Y."/>
            <person name="Orlando V."/>
            <person name="Pang K.C."/>
            <person name="Pavan W.J."/>
            <person name="Pavesi G."/>
            <person name="Pesole G."/>
            <person name="Petrovsky N."/>
            <person name="Piazza S."/>
            <person name="Reed J."/>
            <person name="Reid J.F."/>
            <person name="Ring B.Z."/>
            <person name="Ringwald M."/>
            <person name="Rost B."/>
            <person name="Ruan Y."/>
            <person name="Salzberg S.L."/>
            <person name="Sandelin A."/>
            <person name="Schneider C."/>
            <person name="Schoenbach C."/>
            <person name="Sekiguchi K."/>
            <person name="Semple C.A."/>
            <person name="Seno S."/>
            <person name="Sessa L."/>
            <person name="Sheng Y."/>
            <person name="Shibata Y."/>
            <person name="Shimada H."/>
            <person name="Shimada K."/>
            <person name="Silva D."/>
            <person name="Sinclair B."/>
            <person name="Sperling S."/>
            <person name="Stupka E."/>
            <person name="Sugiura K."/>
            <person name="Sultana R."/>
            <person name="Takenaka Y."/>
            <person name="Taki K."/>
            <person name="Tammoja K."/>
            <person name="Tan S.L."/>
            <person name="Tang S."/>
            <person name="Taylor M.S."/>
            <person name="Tegner J."/>
            <person name="Teichmann S.A."/>
            <person name="Ueda H.R."/>
            <person name="van Nimwegen E."/>
            <person name="Verardo R."/>
            <person name="Wei C.L."/>
            <person name="Yagi K."/>
            <person name="Yamanishi H."/>
            <person name="Zabarovsky E."/>
            <person name="Zhu S."/>
            <person name="Zimmer A."/>
            <person name="Hide W."/>
            <person name="Bult C."/>
            <person name="Grimmond S.M."/>
            <person name="Teasdale R.D."/>
            <person name="Liu E.T."/>
            <person name="Brusic V."/>
            <person name="Quackenbush J."/>
            <person name="Wahlestedt C."/>
            <person name="Mattick J.S."/>
            <person name="Hume D.A."/>
            <person name="Kai C."/>
            <person name="Sasaki D."/>
            <person name="Tomaru Y."/>
            <person name="Fukuda S."/>
            <person name="Kanamori-Katayama M."/>
            <person name="Suzuki M."/>
            <person name="Aoki J."/>
            <person name="Arakawa T."/>
            <person name="Iida J."/>
            <person name="Imamura K."/>
            <person name="Itoh M."/>
            <person name="Kato T."/>
            <person name="Kawaji H."/>
            <person name="Kawagashira N."/>
            <person name="Kawashima T."/>
            <person name="Kojima M."/>
            <person name="Kondo S."/>
            <person name="Konno H."/>
            <person name="Nakano K."/>
            <person name="Ninomiya N."/>
            <person name="Nishio T."/>
            <person name="Okada M."/>
            <person name="Plessy C."/>
            <person name="Shibata K."/>
            <person name="Shiraki T."/>
            <person name="Suzuki S."/>
            <person name="Tagami M."/>
            <person name="Waki K."/>
            <person name="Watahiki A."/>
            <person name="Okamura-Oho Y."/>
            <person name="Suzuki H."/>
            <person name="Kawai J."/>
            <person name="Hayashizaki Y."/>
        </authorList>
    </citation>
    <scope>NUCLEOTIDE SEQUENCE [LARGE SCALE MRNA] OF 1007-1230</scope>
    <source>
        <strain>C57BL/6J</strain>
        <tissue>Tongue</tissue>
    </source>
</reference>
<reference key="4">
    <citation type="journal article" date="2010" name="Cell">
        <title>A tissue-specific atlas of mouse protein phosphorylation and expression.</title>
        <authorList>
            <person name="Huttlin E.L."/>
            <person name="Jedrychowski M.P."/>
            <person name="Elias J.E."/>
            <person name="Goswami T."/>
            <person name="Rad R."/>
            <person name="Beausoleil S.A."/>
            <person name="Villen J."/>
            <person name="Haas W."/>
            <person name="Sowa M.E."/>
            <person name="Gygi S.P."/>
        </authorList>
    </citation>
    <scope>PHOSPHORYLATION [LARGE SCALE ANALYSIS] AT SER-558</scope>
    <scope>IDENTIFICATION BY MASS SPECTROMETRY [LARGE SCALE ANALYSIS]</scope>
    <source>
        <tissue>Brain</tissue>
        <tissue>Brown adipose tissue</tissue>
        <tissue>Heart</tissue>
        <tissue>Kidney</tissue>
        <tissue>Liver</tissue>
        <tissue>Lung</tissue>
        <tissue>Pancreas</tissue>
        <tissue>Spleen</tissue>
        <tissue>Testis</tissue>
    </source>
</reference>
<protein>
    <recommendedName>
        <fullName>Cullin-associated NEDD8-dissociated protein 1</fullName>
    </recommendedName>
    <alternativeName>
        <fullName>Cullin-associated and neddylation-dissociated protein 1</fullName>
    </alternativeName>
    <alternativeName>
        <fullName>p120 CAND1</fullName>
    </alternativeName>
</protein>
<proteinExistence type="evidence at protein level"/>
<evidence type="ECO:0000250" key="1"/>
<evidence type="ECO:0000250" key="2">
    <source>
        <dbReference type="UniProtKB" id="P97536"/>
    </source>
</evidence>
<evidence type="ECO:0000250" key="3">
    <source>
        <dbReference type="UniProtKB" id="Q86VP6"/>
    </source>
</evidence>
<evidence type="ECO:0000256" key="4">
    <source>
        <dbReference type="SAM" id="MobiDB-lite"/>
    </source>
</evidence>
<evidence type="ECO:0000305" key="5"/>
<evidence type="ECO:0007744" key="6">
    <source>
    </source>
</evidence>
<accession>Q6ZQ38</accession>
<accession>Q6PFR0</accession>
<accession>Q9CV45</accession>
<keyword id="KW-0007">Acetylation</keyword>
<keyword id="KW-0963">Cytoplasm</keyword>
<keyword id="KW-0539">Nucleus</keyword>
<keyword id="KW-0597">Phosphoprotein</keyword>
<keyword id="KW-1185">Reference proteome</keyword>
<keyword id="KW-0677">Repeat</keyword>
<keyword id="KW-0833">Ubl conjugation pathway</keyword>
<dbReference type="EMBL" id="AK129225">
    <property type="protein sequence ID" value="BAC98035.1"/>
    <property type="status" value="ALT_INIT"/>
    <property type="molecule type" value="mRNA"/>
</dbReference>
<dbReference type="EMBL" id="BC057457">
    <property type="protein sequence ID" value="AAH57457.1"/>
    <property type="status" value="ALT_INIT"/>
    <property type="molecule type" value="mRNA"/>
</dbReference>
<dbReference type="EMBL" id="AK009683">
    <property type="protein sequence ID" value="BAB26438.1"/>
    <property type="status" value="ALT_INIT"/>
    <property type="molecule type" value="mRNA"/>
</dbReference>
<dbReference type="CCDS" id="CCDS48701.1"/>
<dbReference type="RefSeq" id="NP_082270.1">
    <property type="nucleotide sequence ID" value="NM_027994.1"/>
</dbReference>
<dbReference type="SMR" id="Q6ZQ38"/>
<dbReference type="BioGRID" id="215017">
    <property type="interactions" value="42"/>
</dbReference>
<dbReference type="FunCoup" id="Q6ZQ38">
    <property type="interactions" value="4798"/>
</dbReference>
<dbReference type="IntAct" id="Q6ZQ38">
    <property type="interactions" value="12"/>
</dbReference>
<dbReference type="MINT" id="Q6ZQ38"/>
<dbReference type="STRING" id="10090.ENSMUSP00000020315"/>
<dbReference type="GlyGen" id="Q6ZQ38">
    <property type="glycosylation" value="2 sites, 1 N-linked glycan (1 site), 1 O-linked glycan (1 site)"/>
</dbReference>
<dbReference type="iPTMnet" id="Q6ZQ38"/>
<dbReference type="MetOSite" id="Q6ZQ38"/>
<dbReference type="PhosphoSitePlus" id="Q6ZQ38"/>
<dbReference type="SwissPalm" id="Q6ZQ38"/>
<dbReference type="jPOST" id="Q6ZQ38"/>
<dbReference type="PaxDb" id="10090-ENSMUSP00000020315"/>
<dbReference type="PeptideAtlas" id="Q6ZQ38"/>
<dbReference type="ProteomicsDB" id="265526"/>
<dbReference type="Pumba" id="Q6ZQ38"/>
<dbReference type="Antibodypedia" id="16667">
    <property type="antibodies" value="215 antibodies from 27 providers"/>
</dbReference>
<dbReference type="Ensembl" id="ENSMUST00000020315.13">
    <property type="protein sequence ID" value="ENSMUSP00000020315.7"/>
    <property type="gene ID" value="ENSMUSG00000020114.13"/>
</dbReference>
<dbReference type="GeneID" id="71902"/>
<dbReference type="KEGG" id="mmu:71902"/>
<dbReference type="UCSC" id="uc007hec.2">
    <property type="organism name" value="mouse"/>
</dbReference>
<dbReference type="AGR" id="MGI:1261820"/>
<dbReference type="CTD" id="55832"/>
<dbReference type="MGI" id="MGI:1261820">
    <property type="gene designation" value="Cand1"/>
</dbReference>
<dbReference type="VEuPathDB" id="HostDB:ENSMUSG00000020114"/>
<dbReference type="eggNOG" id="KOG1824">
    <property type="taxonomic scope" value="Eukaryota"/>
</dbReference>
<dbReference type="GeneTree" id="ENSGT00390000017740"/>
<dbReference type="HOGENOM" id="CLU_007157_0_0_1"/>
<dbReference type="InParanoid" id="Q6ZQ38"/>
<dbReference type="OMA" id="AYIPHFQ"/>
<dbReference type="OrthoDB" id="6260732at2759"/>
<dbReference type="PhylomeDB" id="Q6ZQ38"/>
<dbReference type="TreeFam" id="TF300355"/>
<dbReference type="Reactome" id="R-MMU-6798695">
    <property type="pathway name" value="Neutrophil degranulation"/>
</dbReference>
<dbReference type="Reactome" id="R-MMU-8951664">
    <property type="pathway name" value="Neddylation"/>
</dbReference>
<dbReference type="Reactome" id="R-MMU-917937">
    <property type="pathway name" value="Iron uptake and transport"/>
</dbReference>
<dbReference type="BioGRID-ORCS" id="71902">
    <property type="hits" value="24 hits in 81 CRISPR screens"/>
</dbReference>
<dbReference type="CD-CODE" id="CE726F99">
    <property type="entry name" value="Postsynaptic density"/>
</dbReference>
<dbReference type="ChiTaRS" id="Cand1">
    <property type="organism name" value="mouse"/>
</dbReference>
<dbReference type="PRO" id="PR:Q6ZQ38"/>
<dbReference type="Proteomes" id="UP000000589">
    <property type="component" value="Chromosome 10"/>
</dbReference>
<dbReference type="RNAct" id="Q6ZQ38">
    <property type="molecule type" value="protein"/>
</dbReference>
<dbReference type="Bgee" id="ENSMUSG00000020114">
    <property type="expression patterns" value="Expressed in spermatocyte and 267 other cell types or tissues"/>
</dbReference>
<dbReference type="ExpressionAtlas" id="Q6ZQ38">
    <property type="expression patterns" value="baseline and differential"/>
</dbReference>
<dbReference type="GO" id="GO:0031461">
    <property type="term" value="C:cullin-RING ubiquitin ligase complex"/>
    <property type="evidence" value="ECO:0000250"/>
    <property type="project" value="UniProtKB"/>
</dbReference>
<dbReference type="GO" id="GO:0005737">
    <property type="term" value="C:cytoplasm"/>
    <property type="evidence" value="ECO:0000250"/>
    <property type="project" value="UniProtKB"/>
</dbReference>
<dbReference type="GO" id="GO:0005829">
    <property type="term" value="C:cytosol"/>
    <property type="evidence" value="ECO:0007669"/>
    <property type="project" value="Ensembl"/>
</dbReference>
<dbReference type="GO" id="GO:0005794">
    <property type="term" value="C:Golgi apparatus"/>
    <property type="evidence" value="ECO:0007669"/>
    <property type="project" value="Ensembl"/>
</dbReference>
<dbReference type="GO" id="GO:0005654">
    <property type="term" value="C:nucleoplasm"/>
    <property type="evidence" value="ECO:0007669"/>
    <property type="project" value="Ensembl"/>
</dbReference>
<dbReference type="GO" id="GO:0005634">
    <property type="term" value="C:nucleus"/>
    <property type="evidence" value="ECO:0000250"/>
    <property type="project" value="UniProtKB"/>
</dbReference>
<dbReference type="GO" id="GO:0000151">
    <property type="term" value="C:ubiquitin ligase complex"/>
    <property type="evidence" value="ECO:0000250"/>
    <property type="project" value="UniProtKB"/>
</dbReference>
<dbReference type="GO" id="GO:0017025">
    <property type="term" value="F:TBP-class protein binding"/>
    <property type="evidence" value="ECO:0007669"/>
    <property type="project" value="Ensembl"/>
</dbReference>
<dbReference type="GO" id="GO:0030154">
    <property type="term" value="P:cell differentiation"/>
    <property type="evidence" value="ECO:0000250"/>
    <property type="project" value="UniProtKB"/>
</dbReference>
<dbReference type="GO" id="GO:0043086">
    <property type="term" value="P:negative regulation of catalytic activity"/>
    <property type="evidence" value="ECO:0000250"/>
    <property type="project" value="UniProtKB"/>
</dbReference>
<dbReference type="GO" id="GO:0045893">
    <property type="term" value="P:positive regulation of DNA-templated transcription"/>
    <property type="evidence" value="ECO:0000250"/>
    <property type="project" value="UniProtKB"/>
</dbReference>
<dbReference type="GO" id="GO:0045899">
    <property type="term" value="P:positive regulation of RNA polymerase II transcription preinitiation complex assembly"/>
    <property type="evidence" value="ECO:0007669"/>
    <property type="project" value="Ensembl"/>
</dbReference>
<dbReference type="GO" id="GO:0016567">
    <property type="term" value="P:protein ubiquitination"/>
    <property type="evidence" value="ECO:0000250"/>
    <property type="project" value="UniProtKB"/>
</dbReference>
<dbReference type="GO" id="GO:0010265">
    <property type="term" value="P:SCF complex assembly"/>
    <property type="evidence" value="ECO:0000250"/>
    <property type="project" value="UniProtKB"/>
</dbReference>
<dbReference type="FunFam" id="1.25.10.10:FF:000047">
    <property type="entry name" value="Cullin-associated NEDD8-dissociated protein 1"/>
    <property type="match status" value="1"/>
</dbReference>
<dbReference type="Gene3D" id="1.25.10.10">
    <property type="entry name" value="Leucine-rich Repeat Variant"/>
    <property type="match status" value="1"/>
</dbReference>
<dbReference type="InterPro" id="IPR011989">
    <property type="entry name" value="ARM-like"/>
</dbReference>
<dbReference type="InterPro" id="IPR016024">
    <property type="entry name" value="ARM-type_fold"/>
</dbReference>
<dbReference type="InterPro" id="IPR039852">
    <property type="entry name" value="CAND1/CAND2"/>
</dbReference>
<dbReference type="InterPro" id="IPR013932">
    <property type="entry name" value="TATA-bd_TIP120"/>
</dbReference>
<dbReference type="PANTHER" id="PTHR12696">
    <property type="entry name" value="TIP120"/>
    <property type="match status" value="1"/>
</dbReference>
<dbReference type="Pfam" id="PF13513">
    <property type="entry name" value="HEAT_EZ"/>
    <property type="match status" value="1"/>
</dbReference>
<dbReference type="Pfam" id="PF08623">
    <property type="entry name" value="TIP120"/>
    <property type="match status" value="1"/>
</dbReference>
<dbReference type="SUPFAM" id="SSF48371">
    <property type="entry name" value="ARM repeat"/>
    <property type="match status" value="1"/>
</dbReference>
<feature type="initiator methionine" description="Removed" evidence="3">
    <location>
        <position position="1"/>
    </location>
</feature>
<feature type="chain" id="PRO_0000089294" description="Cullin-associated NEDD8-dissociated protein 1">
    <location>
        <begin position="2"/>
        <end position="1230"/>
    </location>
</feature>
<feature type="repeat" description="HEAT 1">
    <location>
        <begin position="2"/>
        <end position="39"/>
    </location>
</feature>
<feature type="repeat" description="HEAT 2">
    <location>
        <begin position="44"/>
        <end position="81"/>
    </location>
</feature>
<feature type="repeat" description="HEAT 3">
    <location>
        <begin position="83"/>
        <end position="119"/>
    </location>
</feature>
<feature type="repeat" description="HEAT 4">
    <location>
        <begin position="131"/>
        <end position="165"/>
    </location>
</feature>
<feature type="repeat" description="HEAT 5">
    <location>
        <begin position="171"/>
        <end position="208"/>
    </location>
</feature>
<feature type="repeat" description="HEAT 6">
    <location>
        <begin position="210"/>
        <end position="247"/>
    </location>
</feature>
<feature type="repeat" description="HEAT 7">
    <location>
        <begin position="248"/>
        <end position="282"/>
    </location>
</feature>
<feature type="repeat" description="HEAT 8">
    <location>
        <begin position="289"/>
        <end position="366"/>
    </location>
</feature>
<feature type="repeat" description="HEAT 9">
    <location>
        <begin position="370"/>
        <end position="407"/>
    </location>
</feature>
<feature type="repeat" description="HEAT 10">
    <location>
        <begin position="424"/>
        <end position="467"/>
    </location>
</feature>
<feature type="repeat" description="HEAT 11">
    <location>
        <begin position="471"/>
        <end position="510"/>
    </location>
</feature>
<feature type="repeat" description="HEAT 12">
    <location>
        <begin position="515"/>
        <end position="552"/>
    </location>
</feature>
<feature type="repeat" description="HEAT 13">
    <location>
        <begin position="563"/>
        <end position="602"/>
    </location>
</feature>
<feature type="repeat" description="HEAT 14">
    <location>
        <begin position="606"/>
        <end position="643"/>
    </location>
</feature>
<feature type="repeat" description="HEAT 15">
    <location>
        <begin position="646"/>
        <end position="683"/>
    </location>
</feature>
<feature type="repeat" description="HEAT 16">
    <location>
        <begin position="688"/>
        <end position="725"/>
    </location>
</feature>
<feature type="repeat" description="HEAT 17">
    <location>
        <begin position="729"/>
        <end position="768"/>
    </location>
</feature>
<feature type="repeat" description="HEAT 18">
    <location>
        <begin position="770"/>
        <end position="808"/>
    </location>
</feature>
<feature type="repeat" description="HEAT 19">
    <location>
        <begin position="809"/>
        <end position="845"/>
    </location>
</feature>
<feature type="repeat" description="HEAT 20">
    <location>
        <begin position="852"/>
        <end position="889"/>
    </location>
</feature>
<feature type="repeat" description="HEAT 21">
    <location>
        <begin position="890"/>
        <end position="927"/>
    </location>
</feature>
<feature type="repeat" description="HEAT 22">
    <location>
        <begin position="928"/>
        <end position="960"/>
    </location>
</feature>
<feature type="repeat" description="HEAT 23">
    <location>
        <begin position="961"/>
        <end position="998"/>
    </location>
</feature>
<feature type="repeat" description="HEAT 24">
    <location>
        <begin position="1002"/>
        <end position="1039"/>
    </location>
</feature>
<feature type="repeat" description="HEAT 25">
    <location>
        <begin position="1043"/>
        <end position="1097"/>
    </location>
</feature>
<feature type="repeat" description="HEAT 26">
    <location>
        <begin position="1099"/>
        <end position="1133"/>
    </location>
</feature>
<feature type="repeat" description="HEAT 27">
    <location>
        <begin position="1140"/>
        <end position="1189"/>
    </location>
</feature>
<feature type="region of interest" description="Disordered" evidence="4">
    <location>
        <begin position="315"/>
        <end position="344"/>
    </location>
</feature>
<feature type="modified residue" description="N-acetylalanine" evidence="3">
    <location>
        <position position="2"/>
    </location>
</feature>
<feature type="modified residue" description="Phosphoserine" evidence="3">
    <location>
        <position position="335"/>
    </location>
</feature>
<feature type="modified residue" description="Phosphoserine" evidence="6">
    <location>
        <position position="558"/>
    </location>
</feature>
<feature type="modified residue" description="N6-acetyllysine" evidence="3">
    <location>
        <position position="971"/>
    </location>
</feature>
<gene>
    <name type="primary">Cand1</name>
    <name type="synonym">D10Ertd516e</name>
    <name type="synonym">Kiaa0829</name>
</gene>
<name>CAND1_MOUSE</name>
<organism>
    <name type="scientific">Mus musculus</name>
    <name type="common">Mouse</name>
    <dbReference type="NCBI Taxonomy" id="10090"/>
    <lineage>
        <taxon>Eukaryota</taxon>
        <taxon>Metazoa</taxon>
        <taxon>Chordata</taxon>
        <taxon>Craniata</taxon>
        <taxon>Vertebrata</taxon>
        <taxon>Euteleostomi</taxon>
        <taxon>Mammalia</taxon>
        <taxon>Eutheria</taxon>
        <taxon>Euarchontoglires</taxon>
        <taxon>Glires</taxon>
        <taxon>Rodentia</taxon>
        <taxon>Myomorpha</taxon>
        <taxon>Muroidea</taxon>
        <taxon>Muridae</taxon>
        <taxon>Murinae</taxon>
        <taxon>Mus</taxon>
        <taxon>Mus</taxon>
    </lineage>
</organism>
<comment type="function">
    <text evidence="1">Key assembly factor of SCF (SKP1-CUL1-F-box protein) E3 ubiquitin ligase complexes that promotes the exchange of the substrate-recognition F-box subunit in SCF complexes, thereby playing a key role in the cellular repertoire of SCF complexes. Acts as a F-box protein exchange factor. The exchange activity of CAND1 is coupled with cycles of neddylation conjugation: in the deneddylated state, cullin-binding CAND1 binds CUL1-RBX1, increasing dissociation of the SCF complex and promoting exchange of the F-box protein. Probably plays a similar role in other cullin-RING E3 ubiquitin ligase complexes (By similarity).</text>
</comment>
<comment type="subunit">
    <text evidence="2 3">Interacts with TBP (By similarity). Part of a complex that contains CUL1 and RBX1. Interacts with unneddylated cullins: interacts with CUL1, CUL2, CUL3, CUL4A, CUL4B and CUL5. Does not bind neddylated CUL1. Interaction with cullins is abolished in presence of COMMD1, which antagonizes with CAND1 for interacting with cullins. Interacts with ERCC6 (By similarity). Interacts with DCUN1D1, DCUN1D2, DCUN1D3, DCUN1D4 and DCUN1D5; these interactions are bridged by cullins and strongly inhibits the neddylation of cullins (By similarity).</text>
</comment>
<comment type="subcellular location">
    <subcellularLocation>
        <location evidence="3">Cytoplasm</location>
    </subcellularLocation>
    <subcellularLocation>
        <location evidence="3">Nucleus</location>
    </subcellularLocation>
    <text evidence="3">Predominantly cytoplasmic.</text>
</comment>
<comment type="similarity">
    <text evidence="5">Belongs to the CAND family.</text>
</comment>
<comment type="sequence caution" evidence="5">
    <conflict type="erroneous initiation">
        <sequence resource="EMBL-CDS" id="AAH57457"/>
    </conflict>
</comment>
<comment type="sequence caution" evidence="5">
    <conflict type="erroneous initiation">
        <sequence resource="EMBL-CDS" id="BAB26438"/>
    </conflict>
</comment>
<comment type="sequence caution" evidence="5">
    <conflict type="erroneous initiation">
        <sequence resource="EMBL-CDS" id="BAC98035"/>
    </conflict>
</comment>